<proteinExistence type="inferred from homology"/>
<name>THIG_KLEP7</name>
<protein>
    <recommendedName>
        <fullName evidence="1">Thiazole synthase</fullName>
        <ecNumber evidence="1">2.8.1.10</ecNumber>
    </recommendedName>
</protein>
<reference key="1">
    <citation type="submission" date="2006-09" db="EMBL/GenBank/DDBJ databases">
        <authorList>
            <consortium name="The Klebsiella pneumonia Genome Sequencing Project"/>
            <person name="McClelland M."/>
            <person name="Sanderson E.K."/>
            <person name="Spieth J."/>
            <person name="Clifton W.S."/>
            <person name="Latreille P."/>
            <person name="Sabo A."/>
            <person name="Pepin K."/>
            <person name="Bhonagiri V."/>
            <person name="Porwollik S."/>
            <person name="Ali J."/>
            <person name="Wilson R.K."/>
        </authorList>
    </citation>
    <scope>NUCLEOTIDE SEQUENCE [LARGE SCALE GENOMIC DNA]</scope>
    <source>
        <strain>ATCC 700721 / MGH 78578</strain>
    </source>
</reference>
<dbReference type="EC" id="2.8.1.10" evidence="1"/>
<dbReference type="EMBL" id="CP000647">
    <property type="protein sequence ID" value="ABR79731.1"/>
    <property type="molecule type" value="Genomic_DNA"/>
</dbReference>
<dbReference type="RefSeq" id="WP_015959240.1">
    <property type="nucleotide sequence ID" value="NC_009648.1"/>
</dbReference>
<dbReference type="SMR" id="A6TGP7"/>
<dbReference type="STRING" id="272620.KPN_04372"/>
<dbReference type="PaxDb" id="272620-KPN_04372"/>
<dbReference type="EnsemblBacteria" id="ABR79731">
    <property type="protein sequence ID" value="ABR79731"/>
    <property type="gene ID" value="KPN_04372"/>
</dbReference>
<dbReference type="KEGG" id="kpn:KPN_04372"/>
<dbReference type="HOGENOM" id="CLU_062233_1_0_6"/>
<dbReference type="UniPathway" id="UPA00060"/>
<dbReference type="Proteomes" id="UP000000265">
    <property type="component" value="Chromosome"/>
</dbReference>
<dbReference type="GO" id="GO:0005737">
    <property type="term" value="C:cytoplasm"/>
    <property type="evidence" value="ECO:0007669"/>
    <property type="project" value="UniProtKB-SubCell"/>
</dbReference>
<dbReference type="GO" id="GO:1990107">
    <property type="term" value="F:thiazole synthase activity"/>
    <property type="evidence" value="ECO:0007669"/>
    <property type="project" value="UniProtKB-EC"/>
</dbReference>
<dbReference type="GO" id="GO:0009229">
    <property type="term" value="P:thiamine diphosphate biosynthetic process"/>
    <property type="evidence" value="ECO:0007669"/>
    <property type="project" value="UniProtKB-UniRule"/>
</dbReference>
<dbReference type="CDD" id="cd04728">
    <property type="entry name" value="ThiG"/>
    <property type="match status" value="1"/>
</dbReference>
<dbReference type="FunFam" id="3.20.20.70:FF:000049">
    <property type="entry name" value="Thiazole synthase"/>
    <property type="match status" value="1"/>
</dbReference>
<dbReference type="Gene3D" id="3.20.20.70">
    <property type="entry name" value="Aldolase class I"/>
    <property type="match status" value="1"/>
</dbReference>
<dbReference type="HAMAP" id="MF_00443">
    <property type="entry name" value="ThiG"/>
    <property type="match status" value="1"/>
</dbReference>
<dbReference type="InterPro" id="IPR013785">
    <property type="entry name" value="Aldolase_TIM"/>
</dbReference>
<dbReference type="InterPro" id="IPR033983">
    <property type="entry name" value="Thiazole_synthase_ThiG"/>
</dbReference>
<dbReference type="InterPro" id="IPR008867">
    <property type="entry name" value="ThiG"/>
</dbReference>
<dbReference type="PANTHER" id="PTHR34266">
    <property type="entry name" value="THIAZOLE SYNTHASE"/>
    <property type="match status" value="1"/>
</dbReference>
<dbReference type="PANTHER" id="PTHR34266:SF2">
    <property type="entry name" value="THIAZOLE SYNTHASE"/>
    <property type="match status" value="1"/>
</dbReference>
<dbReference type="Pfam" id="PF05690">
    <property type="entry name" value="ThiG"/>
    <property type="match status" value="1"/>
</dbReference>
<dbReference type="SUPFAM" id="SSF110399">
    <property type="entry name" value="ThiG-like"/>
    <property type="match status" value="1"/>
</dbReference>
<keyword id="KW-0963">Cytoplasm</keyword>
<keyword id="KW-0704">Schiff base</keyword>
<keyword id="KW-0784">Thiamine biosynthesis</keyword>
<keyword id="KW-0808">Transferase</keyword>
<accession>A6TGP7</accession>
<gene>
    <name evidence="1" type="primary">thiG</name>
    <name type="ordered locus">KPN78578_43070</name>
    <name type="ORF">KPN_04372</name>
</gene>
<evidence type="ECO:0000255" key="1">
    <source>
        <dbReference type="HAMAP-Rule" id="MF_00443"/>
    </source>
</evidence>
<comment type="function">
    <text evidence="1">Catalyzes the rearrangement of 1-deoxy-D-xylulose 5-phosphate (DXP) to produce the thiazole phosphate moiety of thiamine. Sulfur is provided by the thiocarboxylate moiety of the carrier protein ThiS. In vitro, sulfur can be provided by H(2)S.</text>
</comment>
<comment type="catalytic activity">
    <reaction evidence="1">
        <text>[ThiS sulfur-carrier protein]-C-terminal-Gly-aminoethanethioate + 2-iminoacetate + 1-deoxy-D-xylulose 5-phosphate = [ThiS sulfur-carrier protein]-C-terminal Gly-Gly + 2-[(2R,5Z)-2-carboxy-4-methylthiazol-5(2H)-ylidene]ethyl phosphate + 2 H2O + H(+)</text>
        <dbReference type="Rhea" id="RHEA:26297"/>
        <dbReference type="Rhea" id="RHEA-COMP:12909"/>
        <dbReference type="Rhea" id="RHEA-COMP:19908"/>
        <dbReference type="ChEBI" id="CHEBI:15377"/>
        <dbReference type="ChEBI" id="CHEBI:15378"/>
        <dbReference type="ChEBI" id="CHEBI:57792"/>
        <dbReference type="ChEBI" id="CHEBI:62899"/>
        <dbReference type="ChEBI" id="CHEBI:77846"/>
        <dbReference type="ChEBI" id="CHEBI:90778"/>
        <dbReference type="ChEBI" id="CHEBI:232372"/>
        <dbReference type="EC" id="2.8.1.10"/>
    </reaction>
</comment>
<comment type="pathway">
    <text evidence="1">Cofactor biosynthesis; thiamine diphosphate biosynthesis.</text>
</comment>
<comment type="subunit">
    <text evidence="1">Homotetramer. Forms heterodimers with either ThiH or ThiS.</text>
</comment>
<comment type="subcellular location">
    <subcellularLocation>
        <location evidence="1">Cytoplasm</location>
    </subcellularLocation>
</comment>
<comment type="similarity">
    <text evidence="1">Belongs to the ThiG family.</text>
</comment>
<organism>
    <name type="scientific">Klebsiella pneumoniae subsp. pneumoniae (strain ATCC 700721 / MGH 78578)</name>
    <dbReference type="NCBI Taxonomy" id="272620"/>
    <lineage>
        <taxon>Bacteria</taxon>
        <taxon>Pseudomonadati</taxon>
        <taxon>Pseudomonadota</taxon>
        <taxon>Gammaproteobacteria</taxon>
        <taxon>Enterobacterales</taxon>
        <taxon>Enterobacteriaceae</taxon>
        <taxon>Klebsiella/Raoultella group</taxon>
        <taxon>Klebsiella</taxon>
        <taxon>Klebsiella pneumoniae complex</taxon>
    </lineage>
</organism>
<feature type="chain" id="PRO_1000026009" description="Thiazole synthase">
    <location>
        <begin position="1"/>
        <end position="256"/>
    </location>
</feature>
<feature type="active site" description="Schiff-base intermediate with DXP" evidence="1">
    <location>
        <position position="95"/>
    </location>
</feature>
<feature type="binding site" evidence="1">
    <location>
        <position position="156"/>
    </location>
    <ligand>
        <name>1-deoxy-D-xylulose 5-phosphate</name>
        <dbReference type="ChEBI" id="CHEBI:57792"/>
    </ligand>
</feature>
<feature type="binding site" evidence="1">
    <location>
        <begin position="182"/>
        <end position="183"/>
    </location>
    <ligand>
        <name>1-deoxy-D-xylulose 5-phosphate</name>
        <dbReference type="ChEBI" id="CHEBI:57792"/>
    </ligand>
</feature>
<feature type="binding site" evidence="1">
    <location>
        <begin position="204"/>
        <end position="205"/>
    </location>
    <ligand>
        <name>1-deoxy-D-xylulose 5-phosphate</name>
        <dbReference type="ChEBI" id="CHEBI:57792"/>
    </ligand>
</feature>
<sequence>MLRIADKTFESHLFTGTGKFAAPKVMVEAIRASGSQLVTLAMKRVDLRQRNDAILAPLLAAGVSLLPNTSGAKTAEEAVFAARLAREALGTHWLKLEIHPDARWLLPDPIETLKAAELLVREGFVVLPYCGADPVLCKRLEEVGCAAVMPLGAPIGSNQGLETKAMLEIIIEQATVPVVVDAGIGVPSHAAQALEMGADAVLVNTAIAVADDPVAMARAFRMAIDAGLLARQAGPGARSTQAQATSPLTGFLEALA</sequence>